<protein>
    <recommendedName>
        <fullName>Potassium voltage-gated channel subfamily A member 3</fullName>
    </recommendedName>
    <alternativeName>
        <fullName>RCK3</fullName>
    </alternativeName>
    <alternativeName>
        <fullName>RGK5</fullName>
    </alternativeName>
    <alternativeName>
        <fullName>Voltage-gated potassium channel subunit Kv1.3</fullName>
    </alternativeName>
    <alternativeName>
        <fullName>Voltage-gated potassium channel subunit Kv3</fullName>
    </alternativeName>
</protein>
<gene>
    <name type="primary">Kcna3</name>
</gene>
<evidence type="ECO:0000250" key="1">
    <source>
        <dbReference type="UniProtKB" id="P16390"/>
    </source>
</evidence>
<evidence type="ECO:0000250" key="2">
    <source>
        <dbReference type="UniProtKB" id="P63142"/>
    </source>
</evidence>
<evidence type="ECO:0000255" key="3"/>
<evidence type="ECO:0000256" key="4">
    <source>
        <dbReference type="SAM" id="MobiDB-lite"/>
    </source>
</evidence>
<evidence type="ECO:0000269" key="5">
    <source>
    </source>
</evidence>
<evidence type="ECO:0000269" key="6">
    <source>
    </source>
</evidence>
<evidence type="ECO:0000269" key="7">
    <source>
    </source>
</evidence>
<evidence type="ECO:0000269" key="8">
    <source>
    </source>
</evidence>
<evidence type="ECO:0000269" key="9">
    <source>
    </source>
</evidence>
<evidence type="ECO:0000269" key="10">
    <source>
    </source>
</evidence>
<evidence type="ECO:0000269" key="11">
    <source>
    </source>
</evidence>
<evidence type="ECO:0000269" key="12">
    <source>
    </source>
</evidence>
<evidence type="ECO:0000269" key="13">
    <source>
    </source>
</evidence>
<evidence type="ECO:0000305" key="14"/>
<keyword id="KW-1003">Cell membrane</keyword>
<keyword id="KW-0325">Glycoprotein</keyword>
<keyword id="KW-0407">Ion channel</keyword>
<keyword id="KW-0406">Ion transport</keyword>
<keyword id="KW-0449">Lipoprotein</keyword>
<keyword id="KW-0472">Membrane</keyword>
<keyword id="KW-0564">Palmitate</keyword>
<keyword id="KW-0597">Phosphoprotein</keyword>
<keyword id="KW-0630">Potassium</keyword>
<keyword id="KW-0631">Potassium channel</keyword>
<keyword id="KW-0633">Potassium transport</keyword>
<keyword id="KW-1185">Reference proteome</keyword>
<keyword id="KW-0812">Transmembrane</keyword>
<keyword id="KW-1133">Transmembrane helix</keyword>
<keyword id="KW-0813">Transport</keyword>
<keyword id="KW-0851">Voltage-gated channel</keyword>
<reference key="1">
    <citation type="journal article" date="1989" name="EMBO J.">
        <title>Molecular basis of functional diversity of voltage-gated potassium channels in mammalian brain.</title>
        <authorList>
            <person name="Stuehmer W."/>
            <person name="Ruppersberg J.P."/>
            <person name="Schroerter K.H."/>
            <person name="Sakmann B."/>
            <person name="Stocker M."/>
            <person name="Giese K.P."/>
            <person name="Perschke A."/>
            <person name="Baumann A."/>
            <person name="Pongs O."/>
        </authorList>
    </citation>
    <scope>NUCLEOTIDE SEQUENCE [MRNA]</scope>
    <scope>FUNCTION</scope>
    <scope>TRANSPORTER ACTIVITY</scope>
    <source>
        <tissue>Brain</tissue>
    </source>
</reference>
<reference key="2">
    <citation type="journal article" date="1990" name="Neuron">
        <title>Cloning and expression of cDNA and genomic clones encoding three delayed rectifier potassium channels in rat brain.</title>
        <authorList>
            <person name="Swanson R."/>
            <person name="Marshall J."/>
            <person name="Smith J."/>
            <person name="Williams J."/>
            <person name="Boyle M.B."/>
            <person name="Folander K."/>
            <person name="Luneau C.J."/>
            <person name="Antanavage J."/>
            <person name="Oliva C."/>
            <person name="Buhrow S.A."/>
            <person name="Bennett C."/>
            <person name="Stein R.B."/>
            <person name="Kaczmarek L.M."/>
        </authorList>
    </citation>
    <scope>NUCLEOTIDE SEQUENCE [GENOMIC DNA]</scope>
    <scope>FUNCTION</scope>
    <scope>TRANSPORTER ACTIVITY</scope>
    <source>
        <tissue>Brain</tissue>
    </source>
</reference>
<reference key="3">
    <citation type="journal article" date="1990" name="J. Immunol.">
        <title>Characterization and functional expression of a rat genomic DNA clone encoding a lymphocyte potassium channel.</title>
        <authorList>
            <person name="Douglass J."/>
            <person name="Osborne P.B."/>
            <person name="Cai Y.C."/>
            <person name="Wilkinson M."/>
            <person name="Christie M.J."/>
            <person name="Adelman J.P."/>
        </authorList>
    </citation>
    <scope>NUCLEOTIDE SEQUENCE [GENOMIC DNA]</scope>
    <scope>FUNCTION</scope>
    <scope>TRANSPORTER ACTIVITY</scope>
    <source>
        <tissue>Lymphocyte</tissue>
    </source>
</reference>
<reference key="4">
    <citation type="journal article" date="1995" name="Nature">
        <title>Clustering of Shaker-type K+ channels by interaction with a family of membrane-associated guanylate kinases.</title>
        <authorList>
            <person name="Kim E."/>
            <person name="Niethammer M."/>
            <person name="Rothschild A."/>
            <person name="Jan Y.N."/>
            <person name="Sheng M."/>
        </authorList>
    </citation>
    <scope>INTERACTION WITH DLG1; DLG2 AND DLG4</scope>
    <scope>PDZ-BINDING MOTIF</scope>
</reference>
<reference key="5">
    <citation type="journal article" date="1996" name="J. Neurosci.">
        <title>Tyrosine phosphorylation of the Kv1.3 potassium channel.</title>
        <authorList>
            <person name="Holmes T.C."/>
            <person name="Fadool D.A."/>
            <person name="Levitan I.B."/>
        </authorList>
    </citation>
    <scope>FUNCTION</scope>
    <scope>TRANSPORTER ACTIVITY</scope>
    <scope>PHOSPHORYLATION AT TYR-449</scope>
    <scope>MUTAGENESIS OF TYR-449</scope>
</reference>
<reference key="6">
    <citation type="journal article" date="2009" name="J. Cell Sci.">
        <title>KCNE4 suppresses Kv1.3 currents by modulating trafficking, surface expression and channel gating.</title>
        <authorList>
            <person name="Sole L."/>
            <person name="Roura-Ferrer M."/>
            <person name="Perez-Verdaguer M."/>
            <person name="Oliveras A."/>
            <person name="Calvo M."/>
            <person name="Fernandez-Fernandez J.M."/>
            <person name="Felipe A."/>
        </authorList>
    </citation>
    <scope>FUNCTION</scope>
    <scope>TRANSPORTER ACTIVITY</scope>
    <scope>SUBCELLULAR LOCATION</scope>
    <scope>INTERACTION WITH KCEN4</scope>
</reference>
<reference key="7">
    <citation type="journal article" date="2012" name="FEBS J.">
        <title>N-glycosylation promotes the cell surface expression of Kv1.3 potassium channels.</title>
        <authorList>
            <person name="Zhu J."/>
            <person name="Yan J."/>
            <person name="Thornhill W.B."/>
        </authorList>
    </citation>
    <scope>GLYCOSYLATION AT ASN-229</scope>
    <scope>LACK OF GLYCOSYLATION AT ASN-228</scope>
    <scope>SUBCELLULAR LOCATION</scope>
</reference>
<reference key="8">
    <citation type="journal article" date="2016" name="J. Cell Sci.">
        <title>The C-terminal domain of Kv1.3 regulates functional interactions with the KCNE4 subunit.</title>
        <authorList>
            <person name="Sole L."/>
            <person name="Roig S.R."/>
            <person name="Vallejo-Gracia A."/>
            <person name="Serrano-Albarras A."/>
            <person name="Martinez-Marmol R."/>
            <person name="Tamkun M.M."/>
            <person name="Felipe A."/>
        </authorList>
    </citation>
    <scope>FUNCTION</scope>
    <scope>TRANSPORTER ACTIVITY</scope>
    <scope>SUBCELLULAR LOCATION</scope>
    <scope>INTERACTION WITH KCNE4 AND SEC24D</scope>
</reference>
<reference key="9">
    <citation type="journal article" date="2020" name="Cells">
        <title>Functional Consequences of the Variable Stoichiometry of the Kv1.3-KCNE4 Complex.</title>
        <authorList>
            <person name="Sole L."/>
            <person name="Sastre D."/>
            <person name="Colomer-Molera M."/>
            <person name="Vallejo-Gracia A."/>
            <person name="Roig S.R."/>
            <person name="Perez-Verdaguer M."/>
            <person name="Lillo P."/>
            <person name="Tamkun M.M."/>
            <person name="Felipe A."/>
        </authorList>
    </citation>
    <scope>FUNCTION</scope>
    <scope>TRANSPORTER ACTIVITY</scope>
    <scope>SUBCELLULAR LOCATION</scope>
    <scope>SUBUNIT</scope>
    <scope>INTERACTION WITH KCEN4</scope>
</reference>
<organism>
    <name type="scientific">Rattus norvegicus</name>
    <name type="common">Rat</name>
    <dbReference type="NCBI Taxonomy" id="10116"/>
    <lineage>
        <taxon>Eukaryota</taxon>
        <taxon>Metazoa</taxon>
        <taxon>Chordata</taxon>
        <taxon>Craniata</taxon>
        <taxon>Vertebrata</taxon>
        <taxon>Euteleostomi</taxon>
        <taxon>Mammalia</taxon>
        <taxon>Eutheria</taxon>
        <taxon>Euarchontoglires</taxon>
        <taxon>Glires</taxon>
        <taxon>Rodentia</taxon>
        <taxon>Myomorpha</taxon>
        <taxon>Muroidea</taxon>
        <taxon>Muridae</taxon>
        <taxon>Murinae</taxon>
        <taxon>Rattus</taxon>
    </lineage>
</organism>
<name>KCNA3_RAT</name>
<feature type="chain" id="PRO_0000053979" description="Potassium voltage-gated channel subfamily A member 3">
    <location>
        <begin position="1"/>
        <end position="525"/>
    </location>
</feature>
<feature type="topological domain" description="Cytoplasmic" evidence="3">
    <location>
        <begin position="1"/>
        <end position="184"/>
    </location>
</feature>
<feature type="transmembrane region" description="Helical; Name=Segment S1" evidence="3">
    <location>
        <begin position="185"/>
        <end position="203"/>
    </location>
</feature>
<feature type="topological domain" description="Extracellular" evidence="3">
    <location>
        <begin position="204"/>
        <end position="244"/>
    </location>
</feature>
<feature type="transmembrane region" description="Helical; Name=Segment S2" evidence="3">
    <location>
        <begin position="245"/>
        <end position="266"/>
    </location>
</feature>
<feature type="topological domain" description="Cytoplasmic" evidence="3">
    <location>
        <begin position="267"/>
        <end position="277"/>
    </location>
</feature>
<feature type="transmembrane region" description="Helical; Name=Segment S3" evidence="3">
    <location>
        <begin position="278"/>
        <end position="298"/>
    </location>
</feature>
<feature type="topological domain" description="Extracellular" evidence="3">
    <location>
        <begin position="299"/>
        <end position="312"/>
    </location>
</feature>
<feature type="transmembrane region" description="Helical; Voltage-sensor; Name=Segment S4" evidence="3">
    <location>
        <begin position="313"/>
        <end position="331"/>
    </location>
</feature>
<feature type="topological domain" description="Cytoplasmic" evidence="3">
    <location>
        <begin position="332"/>
        <end position="347"/>
    </location>
</feature>
<feature type="transmembrane region" description="Helical; Name=Segment S5" evidence="3">
    <location>
        <begin position="348"/>
        <end position="367"/>
    </location>
</feature>
<feature type="topological domain" description="Extracellular" evidence="3">
    <location>
        <begin position="368"/>
        <end position="408"/>
    </location>
</feature>
<feature type="transmembrane region" description="Helical; Name=Segment S6" evidence="3">
    <location>
        <begin position="409"/>
        <end position="431"/>
    </location>
</feature>
<feature type="topological domain" description="Cytoplasmic" evidence="3">
    <location>
        <begin position="432"/>
        <end position="525"/>
    </location>
</feature>
<feature type="region of interest" description="Disordered" evidence="4">
    <location>
        <begin position="1"/>
        <end position="23"/>
    </location>
</feature>
<feature type="region of interest" description="Interaction with KCNE4" evidence="10">
    <location>
        <begin position="432"/>
        <end position="525"/>
    </location>
</feature>
<feature type="short sequence motif" description="Selectivity filter" evidence="2">
    <location>
        <begin position="394"/>
        <end position="399"/>
    </location>
</feature>
<feature type="short sequence motif" description="PDZ-binding" evidence="12">
    <location>
        <begin position="523"/>
        <end position="525"/>
    </location>
</feature>
<feature type="site" description="Not glycosylated" evidence="6">
    <location>
        <position position="228"/>
    </location>
</feature>
<feature type="modified residue" description="Phosphotyrosine" evidence="13">
    <location>
        <position position="449"/>
    </location>
</feature>
<feature type="modified residue" description="Phosphoserine; by PKA" evidence="3">
    <location>
        <position position="470"/>
    </location>
</feature>
<feature type="lipid moiety-binding region" description="S-palmitoyl cysteine" evidence="3">
    <location>
        <position position="267"/>
    </location>
</feature>
<feature type="glycosylation site" description="N-linked (GlcNAc...) asparagine" evidence="6">
    <location>
        <position position="229"/>
    </location>
</feature>
<feature type="mutagenesis site" description="Loss of phosphorylation." evidence="13">
    <original>Y</original>
    <variation>F</variation>
    <location>
        <position position="449"/>
    </location>
</feature>
<feature type="sequence conflict" description="In Ref. 1; CAA34132." evidence="14" ref="1">
    <original>F</original>
    <variation>L</variation>
    <location>
        <position position="106"/>
    </location>
</feature>
<feature type="sequence conflict" description="In Ref. 3; AAA42035." evidence="14" ref="3">
    <original>G</original>
    <variation>R</variation>
    <location>
        <position position="181"/>
    </location>
</feature>
<feature type="sequence conflict" description="In Ref. 3; AAA42035." evidence="14" ref="3">
    <original>V</original>
    <variation>L</variation>
    <location>
        <position position="430"/>
    </location>
</feature>
<proteinExistence type="evidence at protein level"/>
<sequence>MTVVPGDHLLEPEAAGGGGGDPPQGGCVSGGGCDRYEPLPPALPAAGEQDCCGERVVINISGLRFETQLKTLCQFPETLLGDPKRRMRYFDPLRNEYFFDRNRPSFDAILYYYQSGGRIRRPVNVPIDIFSEEIRFYQLGEEAMEKFREDEGFLREEERPLPRRDFQRQVWLLFEYPESSGPARGIAIVSVLVILISIVIFCLETLPEFRDEKDYPASPSQDVFEAANNSTSGASSGASSFSDPFFVVETLCIIWFSFELLVRFFACPSKATFSRNIMNLIDIVAIIPYFITLGTELAERQGNGQQAMSLAILRVIRLVRVFRIFKLSRHSKGLQILGQTLKASMRELGLLIFFLFIGVILFSSAVYFAEADDPSSGFNSIPDAFWWAVVTMTTVGYGDMHPVTIGGKIVGSLCAIAGVLTIALPVPVIVSNFNYFYHRETEGEEQAQYMHVGSCQHLSSSAEELRKARSNSTLSKSEYMVIEEGGMNHSAFPQTPFKTGNSTATCTTNNNPNSCVNIKKIFTDV</sequence>
<dbReference type="EMBL" id="X16001">
    <property type="protein sequence ID" value="CAA34132.1"/>
    <property type="molecule type" value="mRNA"/>
</dbReference>
<dbReference type="EMBL" id="M30312">
    <property type="protein sequence ID" value="AAA42035.1"/>
    <property type="molecule type" value="Genomic_DNA"/>
</dbReference>
<dbReference type="EMBL" id="M31744">
    <property type="protein sequence ID" value="AAA41500.1"/>
    <property type="molecule type" value="Genomic_DNA"/>
</dbReference>
<dbReference type="PIR" id="A43531">
    <property type="entry name" value="A43531"/>
</dbReference>
<dbReference type="RefSeq" id="NP_062143.3">
    <property type="nucleotide sequence ID" value="NM_019270.4"/>
</dbReference>
<dbReference type="SMR" id="P15384"/>
<dbReference type="BioGRID" id="248344">
    <property type="interactions" value="2"/>
</dbReference>
<dbReference type="CORUM" id="P15384"/>
<dbReference type="FunCoup" id="P15384">
    <property type="interactions" value="1462"/>
</dbReference>
<dbReference type="IntAct" id="P15384">
    <property type="interactions" value="1"/>
</dbReference>
<dbReference type="STRING" id="10116.ENSRNOP00000075761"/>
<dbReference type="BindingDB" id="P15384"/>
<dbReference type="ChEMBL" id="CHEMBL4248"/>
<dbReference type="GuidetoPHARMACOLOGY" id="540"/>
<dbReference type="GlyCosmos" id="P15384">
    <property type="glycosylation" value="1 site, No reported glycans"/>
</dbReference>
<dbReference type="GlyGen" id="P15384">
    <property type="glycosylation" value="1 site"/>
</dbReference>
<dbReference type="iPTMnet" id="P15384"/>
<dbReference type="PhosphoSitePlus" id="P15384"/>
<dbReference type="PaxDb" id="10116-ENSRNOP00000024372"/>
<dbReference type="ABCD" id="P15384">
    <property type="antibodies" value="1 sequenced antibody"/>
</dbReference>
<dbReference type="Ensembl" id="ENSRNOT00000092240.2">
    <property type="protein sequence ID" value="ENSRNOP00000075761.1"/>
    <property type="gene ID" value="ENSRNOG00000062002.2"/>
</dbReference>
<dbReference type="Ensembl" id="ENSRNOT00000108050.1">
    <property type="protein sequence ID" value="ENSRNOP00000096474.1"/>
    <property type="gene ID" value="ENSRNOG00000062002.2"/>
</dbReference>
<dbReference type="GeneID" id="29731"/>
<dbReference type="KEGG" id="rno:29731"/>
<dbReference type="UCSC" id="RGD:2951">
    <property type="organism name" value="rat"/>
</dbReference>
<dbReference type="AGR" id="RGD:2951"/>
<dbReference type="CTD" id="3738"/>
<dbReference type="RGD" id="2951">
    <property type="gene designation" value="Kcna3"/>
</dbReference>
<dbReference type="eggNOG" id="KOG1545">
    <property type="taxonomic scope" value="Eukaryota"/>
</dbReference>
<dbReference type="GeneTree" id="ENSGT00940000160210"/>
<dbReference type="InParanoid" id="P15384"/>
<dbReference type="OMA" id="INHSAFK"/>
<dbReference type="OrthoDB" id="415460at2759"/>
<dbReference type="PhylomeDB" id="P15384"/>
<dbReference type="TreeFam" id="TF313103"/>
<dbReference type="Reactome" id="R-RNO-1296072">
    <property type="pathway name" value="Voltage gated Potassium channels"/>
</dbReference>
<dbReference type="PRO" id="PR:P15384"/>
<dbReference type="Proteomes" id="UP000002494">
    <property type="component" value="Chromosome 2"/>
</dbReference>
<dbReference type="Bgee" id="ENSRNOG00000062002">
    <property type="expression patterns" value="Expressed in thymus and 12 other cell types or tissues"/>
</dbReference>
<dbReference type="GO" id="GO:0030424">
    <property type="term" value="C:axon"/>
    <property type="evidence" value="ECO:0000266"/>
    <property type="project" value="RGD"/>
</dbReference>
<dbReference type="GO" id="GO:0044305">
    <property type="term" value="C:calyx of Held"/>
    <property type="evidence" value="ECO:0000314"/>
    <property type="project" value="SynGO"/>
</dbReference>
<dbReference type="GO" id="GO:0098978">
    <property type="term" value="C:glutamatergic synapse"/>
    <property type="evidence" value="ECO:0000314"/>
    <property type="project" value="SynGO"/>
</dbReference>
<dbReference type="GO" id="GO:0016020">
    <property type="term" value="C:membrane"/>
    <property type="evidence" value="ECO:0000318"/>
    <property type="project" value="GO_Central"/>
</dbReference>
<dbReference type="GO" id="GO:0045121">
    <property type="term" value="C:membrane raft"/>
    <property type="evidence" value="ECO:0000314"/>
    <property type="project" value="BHF-UCL"/>
</dbReference>
<dbReference type="GO" id="GO:0005886">
    <property type="term" value="C:plasma membrane"/>
    <property type="evidence" value="ECO:0000314"/>
    <property type="project" value="UniProtKB"/>
</dbReference>
<dbReference type="GO" id="GO:0045211">
    <property type="term" value="C:postsynaptic membrane"/>
    <property type="evidence" value="ECO:0000314"/>
    <property type="project" value="SynGO"/>
</dbReference>
<dbReference type="GO" id="GO:0042734">
    <property type="term" value="C:presynaptic membrane"/>
    <property type="evidence" value="ECO:0000314"/>
    <property type="project" value="SynGO"/>
</dbReference>
<dbReference type="GO" id="GO:0008076">
    <property type="term" value="C:voltage-gated potassium channel complex"/>
    <property type="evidence" value="ECO:0000318"/>
    <property type="project" value="GO_Central"/>
</dbReference>
<dbReference type="GO" id="GO:0005251">
    <property type="term" value="F:delayed rectifier potassium channel activity"/>
    <property type="evidence" value="ECO:0000315"/>
    <property type="project" value="RGD"/>
</dbReference>
<dbReference type="GO" id="GO:0015271">
    <property type="term" value="F:outward rectifier potassium channel activity"/>
    <property type="evidence" value="ECO:0000315"/>
    <property type="project" value="RGD"/>
</dbReference>
<dbReference type="GO" id="GO:0005249">
    <property type="term" value="F:voltage-gated potassium channel activity"/>
    <property type="evidence" value="ECO:0000314"/>
    <property type="project" value="UniProtKB"/>
</dbReference>
<dbReference type="GO" id="GO:0001508">
    <property type="term" value="P:action potential"/>
    <property type="evidence" value="ECO:0000318"/>
    <property type="project" value="GO_Central"/>
</dbReference>
<dbReference type="GO" id="GO:0022038">
    <property type="term" value="P:corpus callosum development"/>
    <property type="evidence" value="ECO:0000270"/>
    <property type="project" value="RGD"/>
</dbReference>
<dbReference type="GO" id="GO:0021554">
    <property type="term" value="P:optic nerve development"/>
    <property type="evidence" value="ECO:0000270"/>
    <property type="project" value="RGD"/>
</dbReference>
<dbReference type="GO" id="GO:0071805">
    <property type="term" value="P:potassium ion transmembrane transport"/>
    <property type="evidence" value="ECO:0000315"/>
    <property type="project" value="UniProtKB"/>
</dbReference>
<dbReference type="GO" id="GO:0006813">
    <property type="term" value="P:potassium ion transport"/>
    <property type="evidence" value="ECO:0000304"/>
    <property type="project" value="RGD"/>
</dbReference>
<dbReference type="GO" id="GO:0051260">
    <property type="term" value="P:protein homooligomerization"/>
    <property type="evidence" value="ECO:0007669"/>
    <property type="project" value="InterPro"/>
</dbReference>
<dbReference type="FunFam" id="1.10.287.70:FF:000002">
    <property type="entry name" value="Potassium voltage-gated channel subfamily a member"/>
    <property type="match status" value="1"/>
</dbReference>
<dbReference type="FunFam" id="3.30.710.10:FF:000007">
    <property type="entry name" value="Potassium voltage-gated channel subfamily A member 2"/>
    <property type="match status" value="1"/>
</dbReference>
<dbReference type="FunFam" id="1.20.120.350:FF:000021">
    <property type="entry name" value="Potassium voltage-gated channel subfamily A member 3"/>
    <property type="match status" value="1"/>
</dbReference>
<dbReference type="Gene3D" id="1.10.287.70">
    <property type="match status" value="1"/>
</dbReference>
<dbReference type="Gene3D" id="3.30.710.10">
    <property type="entry name" value="Potassium Channel Kv1.1, Chain A"/>
    <property type="match status" value="1"/>
</dbReference>
<dbReference type="Gene3D" id="1.20.120.350">
    <property type="entry name" value="Voltage-gated potassium channels. Chain C"/>
    <property type="match status" value="1"/>
</dbReference>
<dbReference type="InterPro" id="IPR000210">
    <property type="entry name" value="BTB/POZ_dom"/>
</dbReference>
<dbReference type="InterPro" id="IPR005821">
    <property type="entry name" value="Ion_trans_dom"/>
</dbReference>
<dbReference type="InterPro" id="IPR003968">
    <property type="entry name" value="K_chnl_volt-dep_Kv"/>
</dbReference>
<dbReference type="InterPro" id="IPR003972">
    <property type="entry name" value="K_chnl_volt-dep_Kv1"/>
</dbReference>
<dbReference type="InterPro" id="IPR004050">
    <property type="entry name" value="K_chnl_volt-dep_Kv1.3"/>
</dbReference>
<dbReference type="InterPro" id="IPR011333">
    <property type="entry name" value="SKP1/BTB/POZ_sf"/>
</dbReference>
<dbReference type="InterPro" id="IPR003131">
    <property type="entry name" value="T1-type_BTB"/>
</dbReference>
<dbReference type="InterPro" id="IPR028325">
    <property type="entry name" value="VG_K_chnl"/>
</dbReference>
<dbReference type="InterPro" id="IPR027359">
    <property type="entry name" value="Volt_channel_dom_sf"/>
</dbReference>
<dbReference type="PANTHER" id="PTHR11537:SF28">
    <property type="entry name" value="POTASSIUM VOLTAGE-GATED CHANNEL SUBFAMILY A MEMBER 3"/>
    <property type="match status" value="1"/>
</dbReference>
<dbReference type="PANTHER" id="PTHR11537">
    <property type="entry name" value="VOLTAGE-GATED POTASSIUM CHANNEL"/>
    <property type="match status" value="1"/>
</dbReference>
<dbReference type="Pfam" id="PF02214">
    <property type="entry name" value="BTB_2"/>
    <property type="match status" value="1"/>
</dbReference>
<dbReference type="Pfam" id="PF00520">
    <property type="entry name" value="Ion_trans"/>
    <property type="match status" value="1"/>
</dbReference>
<dbReference type="PRINTS" id="PR00169">
    <property type="entry name" value="KCHANNEL"/>
</dbReference>
<dbReference type="PRINTS" id="PR01510">
    <property type="entry name" value="KV13CHANNEL"/>
</dbReference>
<dbReference type="PRINTS" id="PR01491">
    <property type="entry name" value="KVCHANNEL"/>
</dbReference>
<dbReference type="PRINTS" id="PR01496">
    <property type="entry name" value="SHAKERCHANEL"/>
</dbReference>
<dbReference type="SMART" id="SM00225">
    <property type="entry name" value="BTB"/>
    <property type="match status" value="1"/>
</dbReference>
<dbReference type="SUPFAM" id="SSF54695">
    <property type="entry name" value="POZ domain"/>
    <property type="match status" value="1"/>
</dbReference>
<dbReference type="SUPFAM" id="SSF81324">
    <property type="entry name" value="Voltage-gated potassium channels"/>
    <property type="match status" value="1"/>
</dbReference>
<accession>P15384</accession>
<comment type="function">
    <text evidence="5 7 8 9 10 11 13">Mediates the voltage-dependent potassium ion permeability of excitable membranes. Assuming opened or closed conformations in response to the voltage difference across the membrane, the protein forms a potassium-selective channel through which potassium ions may pass in accordance with their electrochemical gradient.</text>
</comment>
<comment type="catalytic activity">
    <reaction evidence="5 7 8 9 10 11 13">
        <text>K(+)(in) = K(+)(out)</text>
        <dbReference type="Rhea" id="RHEA:29463"/>
        <dbReference type="ChEBI" id="CHEBI:29103"/>
    </reaction>
</comment>
<comment type="activity regulation">
    <text evidence="1">Activity is up-regulated by JAK2.</text>
</comment>
<comment type="subunit">
    <text evidence="5 10 11 12">Homotetramer. Forms heterooligomers with KCNE4 which inhibits KCNA3 activity by impairing localization to the cell membrane. The stoichiometry of KCNA3 and KCNE4 in the heterooligomers are 4:1, 4:2, 4:3 or 4:4 respectively. Increasing the number of KCNE4 subunits steadily slows the activation KCNA3 and decreases its abundance at the cell membrane. However, a single subunit of KCNE4 is sufficient for the cooperative enhancement of the inactivating function of the channel (PubMed:19773357, PubMed:27802162, PubMed:32370164). Interacts with SEC24D; this interaction is reduced in the presence of KCNE4 (PubMed:27802162). Interacts with DLG1, DLG2 and DLG4 via their PDZ domains (PubMed:7477295).</text>
</comment>
<comment type="interaction">
    <interactant intactId="EBI-631478">
        <id>P15384</id>
    </interactant>
    <interactant intactId="EBI-80389">
        <id>P78352</id>
        <label>DLG4</label>
    </interactant>
    <organismsDiffer>true</organismsDiffer>
    <experiments>2</experiments>
</comment>
<comment type="subcellular location">
    <subcellularLocation>
        <location evidence="5 6 10 11">Cell membrane</location>
        <topology evidence="3">Multi-pass membrane protein</topology>
    </subcellularLocation>
</comment>
<comment type="domain">
    <text>The N-terminus may be important in determining the rate of inactivation of the channel while the tail may play a role in modulation of channel activity and/or targeting of the channel to specific subcellular compartments.</text>
</comment>
<comment type="domain">
    <text>The segment S4 is probably the voltage-sensor and is characterized by a series of positively charged amino acids at every third position.</text>
</comment>
<comment type="PTM">
    <text evidence="13">Phosphorylation on Tyr-449 inhibits its channel activity.</text>
</comment>
<comment type="PTM">
    <text evidence="6">N-glycosylation promotes the cell surface expression.</text>
</comment>
<comment type="similarity">
    <text evidence="14">Belongs to the potassium channel family. A (Shaker) (TC 1.A.1.2) subfamily. Kv1.3/KCNA3 sub-subfamily.</text>
</comment>